<evidence type="ECO:0000250" key="1"/>
<evidence type="ECO:0000256" key="2">
    <source>
        <dbReference type="SAM" id="MobiDB-lite"/>
    </source>
</evidence>
<evidence type="ECO:0000269" key="3">
    <source>
    </source>
</evidence>
<evidence type="ECO:0000305" key="4"/>
<gene>
    <name type="primary">NSE4A</name>
    <name type="ordered locus">At1g51130</name>
    <name type="ORF">F23H24.4</name>
</gene>
<dbReference type="EMBL" id="AC079828">
    <property type="protein sequence ID" value="AAG50545.1"/>
    <property type="molecule type" value="Genomic_DNA"/>
</dbReference>
<dbReference type="EMBL" id="CP002684">
    <property type="protein sequence ID" value="AEE32625.1"/>
    <property type="molecule type" value="Genomic_DNA"/>
</dbReference>
<dbReference type="EMBL" id="BT004096">
    <property type="protein sequence ID" value="AAO42122.1"/>
    <property type="molecule type" value="mRNA"/>
</dbReference>
<dbReference type="EMBL" id="BT006087">
    <property type="protein sequence ID" value="AAP04072.1"/>
    <property type="molecule type" value="mRNA"/>
</dbReference>
<dbReference type="PIR" id="G96548">
    <property type="entry name" value="G96548"/>
</dbReference>
<dbReference type="RefSeq" id="NP_175525.1">
    <property type="nucleotide sequence ID" value="NM_103992.3"/>
</dbReference>
<dbReference type="FunCoup" id="Q9C689">
    <property type="interactions" value="2786"/>
</dbReference>
<dbReference type="STRING" id="3702.Q9C689"/>
<dbReference type="PaxDb" id="3702-AT1G51130.1"/>
<dbReference type="ProteomicsDB" id="249400"/>
<dbReference type="EnsemblPlants" id="AT1G51130.1">
    <property type="protein sequence ID" value="AT1G51130.1"/>
    <property type="gene ID" value="AT1G51130"/>
</dbReference>
<dbReference type="GeneID" id="841536"/>
<dbReference type="Gramene" id="AT1G51130.1">
    <property type="protein sequence ID" value="AT1G51130.1"/>
    <property type="gene ID" value="AT1G51130"/>
</dbReference>
<dbReference type="KEGG" id="ath:AT1G51130"/>
<dbReference type="Araport" id="AT1G51130"/>
<dbReference type="TAIR" id="AT1G51130">
    <property type="gene designation" value="NSE4A"/>
</dbReference>
<dbReference type="eggNOG" id="KOG2866">
    <property type="taxonomic scope" value="Eukaryota"/>
</dbReference>
<dbReference type="HOGENOM" id="CLU_041037_0_0_1"/>
<dbReference type="InParanoid" id="Q9C689"/>
<dbReference type="OMA" id="MEDKRQT"/>
<dbReference type="PhylomeDB" id="Q9C689"/>
<dbReference type="PRO" id="PR:Q9C689"/>
<dbReference type="Proteomes" id="UP000006548">
    <property type="component" value="Chromosome 1"/>
</dbReference>
<dbReference type="ExpressionAtlas" id="Q9C689">
    <property type="expression patterns" value="baseline and differential"/>
</dbReference>
<dbReference type="GO" id="GO:0000791">
    <property type="term" value="C:euchromatin"/>
    <property type="evidence" value="ECO:0000314"/>
    <property type="project" value="TAIR"/>
</dbReference>
<dbReference type="GO" id="GO:0005634">
    <property type="term" value="C:nucleus"/>
    <property type="evidence" value="ECO:0007669"/>
    <property type="project" value="UniProtKB-SubCell"/>
</dbReference>
<dbReference type="GO" id="GO:0030915">
    <property type="term" value="C:Smc5-Smc6 complex"/>
    <property type="evidence" value="ECO:0007669"/>
    <property type="project" value="InterPro"/>
</dbReference>
<dbReference type="GO" id="GO:0006310">
    <property type="term" value="P:DNA recombination"/>
    <property type="evidence" value="ECO:0007669"/>
    <property type="project" value="UniProtKB-KW"/>
</dbReference>
<dbReference type="GO" id="GO:0006281">
    <property type="term" value="P:DNA repair"/>
    <property type="evidence" value="ECO:0007669"/>
    <property type="project" value="UniProtKB-KW"/>
</dbReference>
<dbReference type="InterPro" id="IPR027786">
    <property type="entry name" value="Nse4/EID"/>
</dbReference>
<dbReference type="InterPro" id="IPR014854">
    <property type="entry name" value="Nse4_C"/>
</dbReference>
<dbReference type="PANTHER" id="PTHR16140">
    <property type="entry name" value="NON-STRUCTURAL MAINTENANCE OF CHROMOSOMES ELEMENT 4"/>
    <property type="match status" value="1"/>
</dbReference>
<dbReference type="PANTHER" id="PTHR16140:SF0">
    <property type="entry name" value="NON-STRUCTURAL MAINTENANCE OF CHROMOSOMES ELEMENT 4"/>
    <property type="match status" value="1"/>
</dbReference>
<dbReference type="Pfam" id="PF08743">
    <property type="entry name" value="Nse4_C"/>
    <property type="match status" value="1"/>
</dbReference>
<feature type="chain" id="PRO_0000424409" description="Non-structural maintenance of chromosomes element 4 homolog A">
    <location>
        <begin position="1"/>
        <end position="403"/>
    </location>
</feature>
<feature type="region of interest" description="Disordered" evidence="2">
    <location>
        <begin position="1"/>
        <end position="57"/>
    </location>
</feature>
<feature type="region of interest" description="Disordered" evidence="2">
    <location>
        <begin position="194"/>
        <end position="226"/>
    </location>
</feature>
<feature type="region of interest" description="Disordered" evidence="2">
    <location>
        <begin position="342"/>
        <end position="403"/>
    </location>
</feature>
<feature type="compositionally biased region" description="Basic and acidic residues" evidence="2">
    <location>
        <begin position="1"/>
        <end position="45"/>
    </location>
</feature>
<feature type="compositionally biased region" description="Basic residues" evidence="2">
    <location>
        <begin position="196"/>
        <end position="206"/>
    </location>
</feature>
<feature type="compositionally biased region" description="Low complexity" evidence="2">
    <location>
        <begin position="342"/>
        <end position="353"/>
    </location>
</feature>
<feature type="compositionally biased region" description="Polar residues" evidence="2">
    <location>
        <begin position="354"/>
        <end position="363"/>
    </location>
</feature>
<feature type="compositionally biased region" description="Basic and acidic residues" evidence="2">
    <location>
        <begin position="384"/>
        <end position="393"/>
    </location>
</feature>
<feature type="compositionally biased region" description="Basic residues" evidence="2">
    <location>
        <begin position="394"/>
        <end position="403"/>
    </location>
</feature>
<accession>Q9C689</accession>
<name>NSE4A_ARATH</name>
<sequence length="403" mass="45082">MRKTVKRESEATGGKREADDEPEKLRSVKKEKQRKTEADSVRPDEPPPPQEEEQGISDRRILRSKYLSLQNEINDCKDDLMKIDSDKFSRIINAVENLHQQVRKPREQIADAEALLDIANTLMSSVKSQSAHGVSPAEFVNALISGFGQGSLGIDTDETAQVSLKWKDLGFAVCSTVLVSCGCSTMLGPMDTELKQRKRAPNRKRTKPGEGVRPDEVDDSQSEEKTDTDKNMTIMFNILGKKKRVQLENLVLNRRSFAQTVENLFALSFLAKDGRVEIIVDKSGSHFAMPRNAPDANVVMSGEVIYNHFVFRLDFKDWKLMSEMVPLGEELMPHRQTAVASSSCPAASAPASADFTQDTQTTPIRKLSRNRGLVVQEETVVEDTPDKEGDGTRRRCKRRLTSS</sequence>
<keyword id="KW-0227">DNA damage</keyword>
<keyword id="KW-0233">DNA recombination</keyword>
<keyword id="KW-0234">DNA repair</keyword>
<keyword id="KW-0539">Nucleus</keyword>
<keyword id="KW-1185">Reference proteome</keyword>
<protein>
    <recommendedName>
        <fullName>Non-structural maintenance of chromosomes element 4 homolog A</fullName>
        <shortName>Non-SMC element 4 homolog A</shortName>
    </recommendedName>
</protein>
<proteinExistence type="evidence at transcript level"/>
<reference key="1">
    <citation type="journal article" date="2000" name="Nature">
        <title>Sequence and analysis of chromosome 1 of the plant Arabidopsis thaliana.</title>
        <authorList>
            <person name="Theologis A."/>
            <person name="Ecker J.R."/>
            <person name="Palm C.J."/>
            <person name="Federspiel N.A."/>
            <person name="Kaul S."/>
            <person name="White O."/>
            <person name="Alonso J."/>
            <person name="Altafi H."/>
            <person name="Araujo R."/>
            <person name="Bowman C.L."/>
            <person name="Brooks S.Y."/>
            <person name="Buehler E."/>
            <person name="Chan A."/>
            <person name="Chao Q."/>
            <person name="Chen H."/>
            <person name="Cheuk R.F."/>
            <person name="Chin C.W."/>
            <person name="Chung M.K."/>
            <person name="Conn L."/>
            <person name="Conway A.B."/>
            <person name="Conway A.R."/>
            <person name="Creasy T.H."/>
            <person name="Dewar K."/>
            <person name="Dunn P."/>
            <person name="Etgu P."/>
            <person name="Feldblyum T.V."/>
            <person name="Feng J.-D."/>
            <person name="Fong B."/>
            <person name="Fujii C.Y."/>
            <person name="Gill J.E."/>
            <person name="Goldsmith A.D."/>
            <person name="Haas B."/>
            <person name="Hansen N.F."/>
            <person name="Hughes B."/>
            <person name="Huizar L."/>
            <person name="Hunter J.L."/>
            <person name="Jenkins J."/>
            <person name="Johnson-Hopson C."/>
            <person name="Khan S."/>
            <person name="Khaykin E."/>
            <person name="Kim C.J."/>
            <person name="Koo H.L."/>
            <person name="Kremenetskaia I."/>
            <person name="Kurtz D.B."/>
            <person name="Kwan A."/>
            <person name="Lam B."/>
            <person name="Langin-Hooper S."/>
            <person name="Lee A."/>
            <person name="Lee J.M."/>
            <person name="Lenz C.A."/>
            <person name="Li J.H."/>
            <person name="Li Y.-P."/>
            <person name="Lin X."/>
            <person name="Liu S.X."/>
            <person name="Liu Z.A."/>
            <person name="Luros J.S."/>
            <person name="Maiti R."/>
            <person name="Marziali A."/>
            <person name="Militscher J."/>
            <person name="Miranda M."/>
            <person name="Nguyen M."/>
            <person name="Nierman W.C."/>
            <person name="Osborne B.I."/>
            <person name="Pai G."/>
            <person name="Peterson J."/>
            <person name="Pham P.K."/>
            <person name="Rizzo M."/>
            <person name="Rooney T."/>
            <person name="Rowley D."/>
            <person name="Sakano H."/>
            <person name="Salzberg S.L."/>
            <person name="Schwartz J.R."/>
            <person name="Shinn P."/>
            <person name="Southwick A.M."/>
            <person name="Sun H."/>
            <person name="Tallon L.J."/>
            <person name="Tambunga G."/>
            <person name="Toriumi M.J."/>
            <person name="Town C.D."/>
            <person name="Utterback T."/>
            <person name="Van Aken S."/>
            <person name="Vaysberg M."/>
            <person name="Vysotskaia V.S."/>
            <person name="Walker M."/>
            <person name="Wu D."/>
            <person name="Yu G."/>
            <person name="Fraser C.M."/>
            <person name="Venter J.C."/>
            <person name="Davis R.W."/>
        </authorList>
    </citation>
    <scope>NUCLEOTIDE SEQUENCE [LARGE SCALE GENOMIC DNA]</scope>
    <source>
        <strain>cv. Columbia</strain>
    </source>
</reference>
<reference key="2">
    <citation type="journal article" date="2017" name="Plant J.">
        <title>Araport11: a complete reannotation of the Arabidopsis thaliana reference genome.</title>
        <authorList>
            <person name="Cheng C.Y."/>
            <person name="Krishnakumar V."/>
            <person name="Chan A.P."/>
            <person name="Thibaud-Nissen F."/>
            <person name="Schobel S."/>
            <person name="Town C.D."/>
        </authorList>
    </citation>
    <scope>GENOME REANNOTATION</scope>
    <source>
        <strain>cv. Columbia</strain>
    </source>
</reference>
<reference key="3">
    <citation type="journal article" date="2003" name="Science">
        <title>Empirical analysis of transcriptional activity in the Arabidopsis genome.</title>
        <authorList>
            <person name="Yamada K."/>
            <person name="Lim J."/>
            <person name="Dale J.M."/>
            <person name="Chen H."/>
            <person name="Shinn P."/>
            <person name="Palm C.J."/>
            <person name="Southwick A.M."/>
            <person name="Wu H.C."/>
            <person name="Kim C.J."/>
            <person name="Nguyen M."/>
            <person name="Pham P.K."/>
            <person name="Cheuk R.F."/>
            <person name="Karlin-Newmann G."/>
            <person name="Liu S.X."/>
            <person name="Lam B."/>
            <person name="Sakano H."/>
            <person name="Wu T."/>
            <person name="Yu G."/>
            <person name="Miranda M."/>
            <person name="Quach H.L."/>
            <person name="Tripp M."/>
            <person name="Chang C.H."/>
            <person name="Lee J.M."/>
            <person name="Toriumi M.J."/>
            <person name="Chan M.M."/>
            <person name="Tang C.C."/>
            <person name="Onodera C.S."/>
            <person name="Deng J.M."/>
            <person name="Akiyama K."/>
            <person name="Ansari Y."/>
            <person name="Arakawa T."/>
            <person name="Banh J."/>
            <person name="Banno F."/>
            <person name="Bowser L."/>
            <person name="Brooks S.Y."/>
            <person name="Carninci P."/>
            <person name="Chao Q."/>
            <person name="Choy N."/>
            <person name="Enju A."/>
            <person name="Goldsmith A.D."/>
            <person name="Gurjal M."/>
            <person name="Hansen N.F."/>
            <person name="Hayashizaki Y."/>
            <person name="Johnson-Hopson C."/>
            <person name="Hsuan V.W."/>
            <person name="Iida K."/>
            <person name="Karnes M."/>
            <person name="Khan S."/>
            <person name="Koesema E."/>
            <person name="Ishida J."/>
            <person name="Jiang P.X."/>
            <person name="Jones T."/>
            <person name="Kawai J."/>
            <person name="Kamiya A."/>
            <person name="Meyers C."/>
            <person name="Nakajima M."/>
            <person name="Narusaka M."/>
            <person name="Seki M."/>
            <person name="Sakurai T."/>
            <person name="Satou M."/>
            <person name="Tamse R."/>
            <person name="Vaysberg M."/>
            <person name="Wallender E.K."/>
            <person name="Wong C."/>
            <person name="Yamamura Y."/>
            <person name="Yuan S."/>
            <person name="Shinozaki K."/>
            <person name="Davis R.W."/>
            <person name="Theologis A."/>
            <person name="Ecker J.R."/>
        </authorList>
    </citation>
    <scope>NUCLEOTIDE SEQUENCE [LARGE SCALE MRNA]</scope>
    <source>
        <strain>cv. Columbia</strain>
    </source>
</reference>
<reference key="4">
    <citation type="journal article" date="2009" name="Plant Cell">
        <title>The STRUCTURAL MAINTENANCE OF CHROMOSOMES 5/6 complex promotes sister chromatid alignment and homologous recombination after DNA damage in Arabidopsis thaliana.</title>
        <authorList>
            <person name="Watanabe K."/>
            <person name="Pacher M."/>
            <person name="Dukowic S."/>
            <person name="Schubert V."/>
            <person name="Puchta H."/>
            <person name="Schubert I."/>
        </authorList>
    </citation>
    <scope>TISSUE SPECIFICITY</scope>
</reference>
<comment type="function">
    <text evidence="1">Component of the SMC5-SMC6 complex, that promotes sister chromatid alignment after DNA damage and facilitates double-stranded DNA breaks (DSBs) repair via homologous recombination between sister chromatids.</text>
</comment>
<comment type="subunit">
    <text evidence="1">Interacts with SMC5, SMC6A or SMC6B. The SMC5-SMC6 complex is composed of the SMC5 and SMC6 heterodimer attached via their hinge domain and from the non-SMC subunit NSE4A or NSE4B (By similarity).</text>
</comment>
<comment type="subcellular location">
    <subcellularLocation>
        <location evidence="1">Nucleus</location>
    </subcellularLocation>
</comment>
<comment type="tissue specificity">
    <text evidence="3">Expressed in seedlings, rosette leaves and floral buds.</text>
</comment>
<comment type="similarity">
    <text evidence="4">Belongs to the NSE4 family.</text>
</comment>
<organism>
    <name type="scientific">Arabidopsis thaliana</name>
    <name type="common">Mouse-ear cress</name>
    <dbReference type="NCBI Taxonomy" id="3702"/>
    <lineage>
        <taxon>Eukaryota</taxon>
        <taxon>Viridiplantae</taxon>
        <taxon>Streptophyta</taxon>
        <taxon>Embryophyta</taxon>
        <taxon>Tracheophyta</taxon>
        <taxon>Spermatophyta</taxon>
        <taxon>Magnoliopsida</taxon>
        <taxon>eudicotyledons</taxon>
        <taxon>Gunneridae</taxon>
        <taxon>Pentapetalae</taxon>
        <taxon>rosids</taxon>
        <taxon>malvids</taxon>
        <taxon>Brassicales</taxon>
        <taxon>Brassicaceae</taxon>
        <taxon>Camelineae</taxon>
        <taxon>Arabidopsis</taxon>
    </lineage>
</organism>